<name>PAAF_ECOLI</name>
<gene>
    <name type="primary">paaF</name>
    <name type="synonym">ydbR</name>
    <name type="ordered locus">b1393</name>
    <name type="ordered locus">JW1388</name>
</gene>
<keyword id="KW-0002">3D-structure</keyword>
<keyword id="KW-0276">Fatty acid metabolism</keyword>
<keyword id="KW-0443">Lipid metabolism</keyword>
<keyword id="KW-0456">Lyase</keyword>
<keyword id="KW-1185">Reference proteome</keyword>
<dbReference type="EC" id="4.2.1.17"/>
<dbReference type="EMBL" id="X97452">
    <property type="protein sequence ID" value="CAA66095.1"/>
    <property type="molecule type" value="Genomic_DNA"/>
</dbReference>
<dbReference type="EMBL" id="U00096">
    <property type="protein sequence ID" value="AAC74475.1"/>
    <property type="molecule type" value="Genomic_DNA"/>
</dbReference>
<dbReference type="EMBL" id="AP009048">
    <property type="protein sequence ID" value="BAA14999.2"/>
    <property type="molecule type" value="Genomic_DNA"/>
</dbReference>
<dbReference type="PIR" id="D64890">
    <property type="entry name" value="D64890"/>
</dbReference>
<dbReference type="RefSeq" id="NP_415911.1">
    <property type="nucleotide sequence ID" value="NC_000913.3"/>
</dbReference>
<dbReference type="RefSeq" id="WP_001292353.1">
    <property type="nucleotide sequence ID" value="NZ_STEB01000005.1"/>
</dbReference>
<dbReference type="PDB" id="4FZW">
    <property type="method" value="X-ray"/>
    <property type="resolution" value="2.55 A"/>
    <property type="chains" value="A/B=1-255"/>
</dbReference>
<dbReference type="PDBsum" id="4FZW"/>
<dbReference type="SMR" id="P76082"/>
<dbReference type="BioGRID" id="4260970">
    <property type="interactions" value="249"/>
</dbReference>
<dbReference type="ComplexPortal" id="CPX-5681">
    <property type="entry name" value="Enoyl CoA hydratase/isomerase complex"/>
</dbReference>
<dbReference type="DIP" id="DIP-10425N"/>
<dbReference type="FunCoup" id="P76082">
    <property type="interactions" value="547"/>
</dbReference>
<dbReference type="IntAct" id="P76082">
    <property type="interactions" value="2"/>
</dbReference>
<dbReference type="STRING" id="511145.b1393"/>
<dbReference type="PaxDb" id="511145-b1393"/>
<dbReference type="EnsemblBacteria" id="AAC74475">
    <property type="protein sequence ID" value="AAC74475"/>
    <property type="gene ID" value="b1393"/>
</dbReference>
<dbReference type="GeneID" id="946011"/>
<dbReference type="KEGG" id="ecj:JW1388"/>
<dbReference type="KEGG" id="eco:b1393"/>
<dbReference type="KEGG" id="ecoc:C3026_08130"/>
<dbReference type="PATRIC" id="fig|1411691.4.peg.878"/>
<dbReference type="EchoBASE" id="EB3503"/>
<dbReference type="eggNOG" id="COG1024">
    <property type="taxonomic scope" value="Bacteria"/>
</dbReference>
<dbReference type="HOGENOM" id="CLU_009834_7_6_6"/>
<dbReference type="InParanoid" id="P76082"/>
<dbReference type="OMA" id="MCADIVI"/>
<dbReference type="OrthoDB" id="9807606at2"/>
<dbReference type="PhylomeDB" id="P76082"/>
<dbReference type="BioCyc" id="EcoCyc:G6714-MONOMER"/>
<dbReference type="BRENDA" id="4.2.1.17">
    <property type="organism ID" value="2026"/>
</dbReference>
<dbReference type="UniPathway" id="UPA00930"/>
<dbReference type="EvolutionaryTrace" id="P76082"/>
<dbReference type="PRO" id="PR:P76082"/>
<dbReference type="Proteomes" id="UP000000625">
    <property type="component" value="Chromosome"/>
</dbReference>
<dbReference type="GO" id="GO:1902494">
    <property type="term" value="C:catalytic complex"/>
    <property type="evidence" value="ECO:0000353"/>
    <property type="project" value="ComplexPortal"/>
</dbReference>
<dbReference type="GO" id="GO:0004300">
    <property type="term" value="F:enoyl-CoA hydratase activity"/>
    <property type="evidence" value="ECO:0000314"/>
    <property type="project" value="UniProtKB"/>
</dbReference>
<dbReference type="GO" id="GO:0042802">
    <property type="term" value="F:identical protein binding"/>
    <property type="evidence" value="ECO:0000314"/>
    <property type="project" value="EcoCyc"/>
</dbReference>
<dbReference type="GO" id="GO:0006635">
    <property type="term" value="P:fatty acid beta-oxidation"/>
    <property type="evidence" value="ECO:0000318"/>
    <property type="project" value="GO_Central"/>
</dbReference>
<dbReference type="GO" id="GO:0010124">
    <property type="term" value="P:phenylacetate catabolic process"/>
    <property type="evidence" value="ECO:0000315"/>
    <property type="project" value="EcoCyc"/>
</dbReference>
<dbReference type="CDD" id="cd06558">
    <property type="entry name" value="crotonase-like"/>
    <property type="match status" value="1"/>
</dbReference>
<dbReference type="FunFam" id="3.90.226.10:FF:000009">
    <property type="entry name" value="Carnitinyl-CoA dehydratase"/>
    <property type="match status" value="1"/>
</dbReference>
<dbReference type="FunFam" id="1.10.12.10:FF:000001">
    <property type="entry name" value="Probable enoyl-CoA hydratase, mitochondrial"/>
    <property type="match status" value="1"/>
</dbReference>
<dbReference type="Gene3D" id="3.90.226.10">
    <property type="entry name" value="2-enoyl-CoA Hydratase, Chain A, domain 1"/>
    <property type="match status" value="1"/>
</dbReference>
<dbReference type="Gene3D" id="1.10.12.10">
    <property type="entry name" value="Lyase 2-enoyl-coa Hydratase, Chain A, domain 2"/>
    <property type="match status" value="1"/>
</dbReference>
<dbReference type="InterPro" id="IPR029045">
    <property type="entry name" value="ClpP/crotonase-like_dom_sf"/>
</dbReference>
<dbReference type="InterPro" id="IPR018376">
    <property type="entry name" value="Enoyl-CoA_hyd/isom_CS"/>
</dbReference>
<dbReference type="InterPro" id="IPR001753">
    <property type="entry name" value="Enoyl-CoA_hydra/iso"/>
</dbReference>
<dbReference type="InterPro" id="IPR014748">
    <property type="entry name" value="Enoyl-CoA_hydra_C"/>
</dbReference>
<dbReference type="NCBIfam" id="NF007239">
    <property type="entry name" value="PRK09674.1"/>
    <property type="match status" value="1"/>
</dbReference>
<dbReference type="PANTHER" id="PTHR11941:SF54">
    <property type="entry name" value="ENOYL-COA HYDRATASE, MITOCHONDRIAL"/>
    <property type="match status" value="1"/>
</dbReference>
<dbReference type="PANTHER" id="PTHR11941">
    <property type="entry name" value="ENOYL-COA HYDRATASE-RELATED"/>
    <property type="match status" value="1"/>
</dbReference>
<dbReference type="Pfam" id="PF00378">
    <property type="entry name" value="ECH_1"/>
    <property type="match status" value="1"/>
</dbReference>
<dbReference type="SUPFAM" id="SSF52096">
    <property type="entry name" value="ClpP/crotonase"/>
    <property type="match status" value="1"/>
</dbReference>
<dbReference type="PROSITE" id="PS00166">
    <property type="entry name" value="ENOYL_COA_HYDRATASE"/>
    <property type="match status" value="1"/>
</dbReference>
<organism>
    <name type="scientific">Escherichia coli (strain K12)</name>
    <dbReference type="NCBI Taxonomy" id="83333"/>
    <lineage>
        <taxon>Bacteria</taxon>
        <taxon>Pseudomonadati</taxon>
        <taxon>Pseudomonadota</taxon>
        <taxon>Gammaproteobacteria</taxon>
        <taxon>Enterobacterales</taxon>
        <taxon>Enterobacteriaceae</taxon>
        <taxon>Escherichia</taxon>
    </lineage>
</organism>
<feature type="chain" id="PRO_0000109330" description="2,3-dehydroadipyl-CoA hydratase">
    <location>
        <begin position="1"/>
        <end position="255"/>
    </location>
</feature>
<feature type="sequence variant" description="In strain: W.">
    <original>R</original>
    <variation>Q</variation>
    <location>
        <position position="11"/>
    </location>
</feature>
<feature type="sequence variant" description="In strain: W.">
    <original>M</original>
    <variation>T</variation>
    <location>
        <position position="32"/>
    </location>
</feature>
<feature type="sequence variant" description="In strain: W.">
    <original>T</original>
    <variation>S</variation>
    <location>
        <position position="45"/>
    </location>
</feature>
<feature type="strand" evidence="6">
    <location>
        <begin position="3"/>
        <end position="9"/>
    </location>
</feature>
<feature type="strand" evidence="6">
    <location>
        <begin position="12"/>
        <end position="18"/>
    </location>
</feature>
<feature type="helix" evidence="6">
    <location>
        <begin position="20"/>
        <end position="22"/>
    </location>
</feature>
<feature type="helix" evidence="6">
    <location>
        <begin position="28"/>
        <end position="42"/>
    </location>
</feature>
<feature type="strand" evidence="6">
    <location>
        <begin position="49"/>
        <end position="53"/>
    </location>
</feature>
<feature type="strand" evidence="6">
    <location>
        <begin position="56"/>
        <end position="61"/>
    </location>
</feature>
<feature type="helix" evidence="6">
    <location>
        <begin position="65"/>
        <end position="69"/>
    </location>
</feature>
<feature type="helix" evidence="6">
    <location>
        <begin position="73"/>
        <end position="77"/>
    </location>
</feature>
<feature type="helix" evidence="6">
    <location>
        <begin position="81"/>
        <end position="89"/>
    </location>
</feature>
<feature type="strand" evidence="6">
    <location>
        <begin position="95"/>
        <end position="99"/>
    </location>
</feature>
<feature type="strand" evidence="6">
    <location>
        <begin position="101"/>
        <end position="104"/>
    </location>
</feature>
<feature type="helix" evidence="6">
    <location>
        <begin position="106"/>
        <end position="113"/>
    </location>
</feature>
<feature type="strand" evidence="6">
    <location>
        <begin position="114"/>
        <end position="120"/>
    </location>
</feature>
<feature type="strand" evidence="6">
    <location>
        <begin position="124"/>
        <end position="126"/>
    </location>
</feature>
<feature type="helix" evidence="6">
    <location>
        <begin position="129"/>
        <end position="132"/>
    </location>
</feature>
<feature type="helix" evidence="6">
    <location>
        <begin position="140"/>
        <end position="148"/>
    </location>
</feature>
<feature type="helix" evidence="6">
    <location>
        <begin position="150"/>
        <end position="159"/>
    </location>
</feature>
<feature type="helix" evidence="6">
    <location>
        <begin position="165"/>
        <end position="171"/>
    </location>
</feature>
<feature type="strand" evidence="6">
    <location>
        <begin position="175"/>
        <end position="178"/>
    </location>
</feature>
<feature type="turn" evidence="6">
    <location>
        <begin position="180"/>
        <end position="182"/>
    </location>
</feature>
<feature type="helix" evidence="6">
    <location>
        <begin position="183"/>
        <end position="194"/>
    </location>
</feature>
<feature type="helix" evidence="6">
    <location>
        <begin position="199"/>
        <end position="212"/>
    </location>
</feature>
<feature type="helix" evidence="6">
    <location>
        <begin position="217"/>
        <end position="232"/>
    </location>
</feature>
<feature type="helix" evidence="6">
    <location>
        <begin position="235"/>
        <end position="245"/>
    </location>
</feature>
<protein>
    <recommendedName>
        <fullName>2,3-dehydroadipyl-CoA hydratase</fullName>
        <ecNumber>4.2.1.17</ecNumber>
    </recommendedName>
    <alternativeName>
        <fullName>Enoyl-CoA hydratase</fullName>
    </alternativeName>
</protein>
<proteinExistence type="evidence at protein level"/>
<accession>P76082</accession>
<accession>O53014</accession>
<accession>P78288</accession>
<reference key="1">
    <citation type="journal article" date="1998" name="J. Biol. Chem.">
        <title>Catabolism of phenylacetic acid in Escherichia coli. Characterization of a new aerobic hybrid pathway.</title>
        <authorList>
            <person name="Ferrandez A."/>
            <person name="Minambres B."/>
            <person name="Garcia B."/>
            <person name="Olivera E.R."/>
            <person name="Luengo J.M."/>
            <person name="Garcia J.L."/>
            <person name="Diaz E."/>
        </authorList>
    </citation>
    <scope>NUCLEOTIDE SEQUENCE [GENOMIC DNA]</scope>
    <scope>FUNCTION IN PHENYLACETATE CATABOLISM</scope>
    <scope>INDUCTION</scope>
    <source>
        <strain>W / ATCC 11105 / DSM 1900</strain>
    </source>
</reference>
<reference key="2">
    <citation type="journal article" date="1996" name="DNA Res.">
        <title>A 570-kb DNA sequence of the Escherichia coli K-12 genome corresponding to the 28.0-40.1 min region on the linkage map.</title>
        <authorList>
            <person name="Aiba H."/>
            <person name="Baba T."/>
            <person name="Fujita K."/>
            <person name="Hayashi K."/>
            <person name="Inada T."/>
            <person name="Isono K."/>
            <person name="Itoh T."/>
            <person name="Kasai H."/>
            <person name="Kashimoto K."/>
            <person name="Kimura S."/>
            <person name="Kitakawa M."/>
            <person name="Kitagawa M."/>
            <person name="Makino K."/>
            <person name="Miki T."/>
            <person name="Mizobuchi K."/>
            <person name="Mori H."/>
            <person name="Mori T."/>
            <person name="Motomura K."/>
            <person name="Nakade S."/>
            <person name="Nakamura Y."/>
            <person name="Nashimoto H."/>
            <person name="Nishio Y."/>
            <person name="Oshima T."/>
            <person name="Saito N."/>
            <person name="Sampei G."/>
            <person name="Seki Y."/>
            <person name="Sivasundaram S."/>
            <person name="Tagami H."/>
            <person name="Takeda J."/>
            <person name="Takemoto K."/>
            <person name="Takeuchi Y."/>
            <person name="Wada C."/>
            <person name="Yamamoto Y."/>
            <person name="Horiuchi T."/>
        </authorList>
    </citation>
    <scope>NUCLEOTIDE SEQUENCE [LARGE SCALE GENOMIC DNA]</scope>
    <source>
        <strain>K12 / W3110 / ATCC 27325 / DSM 5911</strain>
    </source>
</reference>
<reference key="3">
    <citation type="journal article" date="1997" name="Science">
        <title>The complete genome sequence of Escherichia coli K-12.</title>
        <authorList>
            <person name="Blattner F.R."/>
            <person name="Plunkett G. III"/>
            <person name="Bloch C.A."/>
            <person name="Perna N.T."/>
            <person name="Burland V."/>
            <person name="Riley M."/>
            <person name="Collado-Vides J."/>
            <person name="Glasner J.D."/>
            <person name="Rode C.K."/>
            <person name="Mayhew G.F."/>
            <person name="Gregor J."/>
            <person name="Davis N.W."/>
            <person name="Kirkpatrick H.A."/>
            <person name="Goeden M.A."/>
            <person name="Rose D.J."/>
            <person name="Mau B."/>
            <person name="Shao Y."/>
        </authorList>
    </citation>
    <scope>NUCLEOTIDE SEQUENCE [LARGE SCALE GENOMIC DNA]</scope>
    <source>
        <strain>K12 / MG1655 / ATCC 47076</strain>
    </source>
</reference>
<reference key="4">
    <citation type="journal article" date="2006" name="Mol. Syst. Biol.">
        <title>Highly accurate genome sequences of Escherichia coli K-12 strains MG1655 and W3110.</title>
        <authorList>
            <person name="Hayashi K."/>
            <person name="Morooka N."/>
            <person name="Yamamoto Y."/>
            <person name="Fujita K."/>
            <person name="Isono K."/>
            <person name="Choi S."/>
            <person name="Ohtsubo E."/>
            <person name="Baba T."/>
            <person name="Wanner B.L."/>
            <person name="Mori H."/>
            <person name="Horiuchi T."/>
        </authorList>
    </citation>
    <scope>NUCLEOTIDE SEQUENCE [LARGE SCALE GENOMIC DNA]</scope>
    <source>
        <strain>K12 / W3110 / ATCC 27325 / DSM 5911</strain>
    </source>
</reference>
<reference key="5">
    <citation type="journal article" date="2000" name="J. Biol. Chem.">
        <title>Transcriptional regulation of the divergent paa catabolic operons for phenylacetic acid degradation in Escherichia coli.</title>
        <authorList>
            <person name="Ferrandez A."/>
            <person name="Garcia J.L."/>
            <person name="Diaz E."/>
        </authorList>
    </citation>
    <scope>TRANSCRIPTIONAL REGULATION</scope>
</reference>
<reference key="6">
    <citation type="journal article" date="2003" name="Eur. J. Biochem.">
        <title>Functional genomics by NMR spectroscopy. Phenylacetate catabolism in Escherichia coli.</title>
        <authorList>
            <person name="Ismail W."/>
            <person name="El-Said Mohamed M."/>
            <person name="Wanner B.L."/>
            <person name="Datsenko K.A."/>
            <person name="Eisenreich W."/>
            <person name="Rohdich F."/>
            <person name="Bacher A."/>
            <person name="Fuchs G."/>
        </authorList>
    </citation>
    <scope>DISRUPTION PHENOTYPE</scope>
</reference>
<reference key="7">
    <citation type="journal article" date="2010" name="Proc. Natl. Acad. Sci. U.S.A.">
        <title>Bacterial phenylalanine and phenylacetate catabolic pathway revealed.</title>
        <authorList>
            <person name="Teufel R."/>
            <person name="Mascaraque V."/>
            <person name="Ismail W."/>
            <person name="Voss M."/>
            <person name="Perera J."/>
            <person name="Eisenreich W."/>
            <person name="Haehnel W."/>
            <person name="Fuchs G."/>
        </authorList>
    </citation>
    <scope>FUNCTION AS AN ENOYL-COA HYDRATASE</scope>
    <scope>CATALYTIC ACTIVITY</scope>
</reference>
<sequence>MSELIVSRQQRVLLLTLNRPAARNALNNALLMQLVNELEAAATDTSISVCVITGNARFFAAGADLNEMAEKDLAATLNDTRPQLWARLQAFNKPLIAAVNGYALGAGCELALLCDVVVAGENARFGLPEITLGIMPGAGGTQRLIRSVGKSLASKMVLSGESITAQQAQQAGLVSDVFPSDLTLEYALQLASKMARHSPLALQAAKQALRQSQEVALQAGLAQERQLFTLLAATEDRHEGISAFLQKRTPDFKGR</sequence>
<evidence type="ECO:0000269" key="1">
    <source>
    </source>
</evidence>
<evidence type="ECO:0000269" key="2">
    <source>
    </source>
</evidence>
<evidence type="ECO:0000269" key="3">
    <source>
    </source>
</evidence>
<evidence type="ECO:0000269" key="4">
    <source>
    </source>
</evidence>
<evidence type="ECO:0000305" key="5"/>
<evidence type="ECO:0007829" key="6">
    <source>
        <dbReference type="PDB" id="4FZW"/>
    </source>
</evidence>
<comment type="function">
    <text evidence="3 4">Catalyzes the reversible conversion of enzymatically produced 2,3-dehydroadipyl-CoA into 3-hydroxyadipyl-CoA.</text>
</comment>
<comment type="catalytic activity">
    <reaction evidence="3">
        <text>a (3S)-3-hydroxyacyl-CoA = a (2E)-enoyl-CoA + H2O</text>
        <dbReference type="Rhea" id="RHEA:16105"/>
        <dbReference type="ChEBI" id="CHEBI:15377"/>
        <dbReference type="ChEBI" id="CHEBI:57318"/>
        <dbReference type="ChEBI" id="CHEBI:58856"/>
        <dbReference type="EC" id="4.2.1.17"/>
    </reaction>
</comment>
<comment type="catalytic activity">
    <reaction evidence="3">
        <text>a 4-saturated-(3S)-3-hydroxyacyl-CoA = a (3E)-enoyl-CoA + H2O</text>
        <dbReference type="Rhea" id="RHEA:20724"/>
        <dbReference type="ChEBI" id="CHEBI:15377"/>
        <dbReference type="ChEBI" id="CHEBI:58521"/>
        <dbReference type="ChEBI" id="CHEBI:137480"/>
        <dbReference type="EC" id="4.2.1.17"/>
    </reaction>
</comment>
<comment type="pathway">
    <text>Aromatic compound metabolism; phenylacetate degradation.</text>
</comment>
<comment type="interaction">
    <interactant intactId="EBI-1115747">
        <id>P76082</id>
    </interactant>
    <interactant intactId="EBI-1118484">
        <id>P77467</id>
        <label>paaG</label>
    </interactant>
    <organismsDiffer>false</organismsDiffer>
    <experiments>3</experiments>
</comment>
<comment type="induction">
    <text evidence="1 4">Activated by cAMP receptor protein (CRP), integration host factor (IHF) and by phenylacetyl-coenzyme A (PA-CoA) that prevents PaaX from binding its target sequences. Inhibited by PaaX.</text>
</comment>
<comment type="disruption phenotype">
    <text evidence="2">Mutants accumulate delta3-dehydroadipate and are unable to use phenylacetate as a carbon source.</text>
</comment>
<comment type="similarity">
    <text evidence="5">Belongs to the enoyl-CoA hydratase/isomerase family.</text>
</comment>